<sequence>MAIHLYKTSTPSTRNRTVDSRVKSNPRNNLIYGQHRCGKGRNARGIITAGHRGGGHKRLYRKIDFRRNEKDIYGRIVTIEYDPNRNAYICLIHYGDGEKRYILHPRGAIIGDTIVSGTEVPIKMGNALPLTDMPLGTAIHNIEITRGRGGQLARAAGAVAKLIAKEGKSATLKLPSGEVRLISKNCSATVGQVGNVGVNQKSLGRAGSKRWLGKRPVVRGVVMNPVDHPHGGGEGRAPIGRKKPTTPWGYPALGRRSRKRNKYSDNLILRRRSK</sequence>
<dbReference type="EMBL" id="DQ898156">
    <property type="protein sequence ID" value="ABI32465.1"/>
    <property type="molecule type" value="Genomic_DNA"/>
</dbReference>
<dbReference type="EMBL" id="DQ898156">
    <property type="protein sequence ID" value="ABI32488.1"/>
    <property type="molecule type" value="Genomic_DNA"/>
</dbReference>
<dbReference type="SMR" id="Q0G9P9"/>
<dbReference type="OMA" id="EACAVWE"/>
<dbReference type="GO" id="GO:0009507">
    <property type="term" value="C:chloroplast"/>
    <property type="evidence" value="ECO:0007669"/>
    <property type="project" value="UniProtKB-SubCell"/>
</dbReference>
<dbReference type="GO" id="GO:0005762">
    <property type="term" value="C:mitochondrial large ribosomal subunit"/>
    <property type="evidence" value="ECO:0007669"/>
    <property type="project" value="TreeGrafter"/>
</dbReference>
<dbReference type="GO" id="GO:0019843">
    <property type="term" value="F:rRNA binding"/>
    <property type="evidence" value="ECO:0007669"/>
    <property type="project" value="UniProtKB-UniRule"/>
</dbReference>
<dbReference type="GO" id="GO:0003735">
    <property type="term" value="F:structural constituent of ribosome"/>
    <property type="evidence" value="ECO:0007669"/>
    <property type="project" value="InterPro"/>
</dbReference>
<dbReference type="GO" id="GO:0016740">
    <property type="term" value="F:transferase activity"/>
    <property type="evidence" value="ECO:0007669"/>
    <property type="project" value="InterPro"/>
</dbReference>
<dbReference type="GO" id="GO:0032543">
    <property type="term" value="P:mitochondrial translation"/>
    <property type="evidence" value="ECO:0007669"/>
    <property type="project" value="TreeGrafter"/>
</dbReference>
<dbReference type="FunFam" id="4.10.950.10:FF:000001">
    <property type="entry name" value="50S ribosomal protein L2"/>
    <property type="match status" value="1"/>
</dbReference>
<dbReference type="FunFam" id="2.30.30.30:FF:000008">
    <property type="entry name" value="50S ribosomal protein L2, chloroplastic"/>
    <property type="match status" value="1"/>
</dbReference>
<dbReference type="FunFam" id="2.40.50.140:FF:000029">
    <property type="entry name" value="50S ribosomal protein L2, chloroplastic"/>
    <property type="match status" value="1"/>
</dbReference>
<dbReference type="Gene3D" id="2.30.30.30">
    <property type="match status" value="1"/>
</dbReference>
<dbReference type="Gene3D" id="2.40.50.140">
    <property type="entry name" value="Nucleic acid-binding proteins"/>
    <property type="match status" value="1"/>
</dbReference>
<dbReference type="Gene3D" id="4.10.950.10">
    <property type="entry name" value="Ribosomal protein L2, domain 3"/>
    <property type="match status" value="1"/>
</dbReference>
<dbReference type="HAMAP" id="MF_01320_B">
    <property type="entry name" value="Ribosomal_uL2_B"/>
    <property type="match status" value="1"/>
</dbReference>
<dbReference type="InterPro" id="IPR012340">
    <property type="entry name" value="NA-bd_OB-fold"/>
</dbReference>
<dbReference type="InterPro" id="IPR014722">
    <property type="entry name" value="Rib_uL2_dom2"/>
</dbReference>
<dbReference type="InterPro" id="IPR002171">
    <property type="entry name" value="Ribosomal_uL2"/>
</dbReference>
<dbReference type="InterPro" id="IPR005880">
    <property type="entry name" value="Ribosomal_uL2_bac/org-type"/>
</dbReference>
<dbReference type="InterPro" id="IPR022669">
    <property type="entry name" value="Ribosomal_uL2_C"/>
</dbReference>
<dbReference type="InterPro" id="IPR022671">
    <property type="entry name" value="Ribosomal_uL2_CS"/>
</dbReference>
<dbReference type="InterPro" id="IPR014726">
    <property type="entry name" value="Ribosomal_uL2_dom3"/>
</dbReference>
<dbReference type="InterPro" id="IPR022666">
    <property type="entry name" value="Ribosomal_uL2_RNA-bd_dom"/>
</dbReference>
<dbReference type="InterPro" id="IPR008991">
    <property type="entry name" value="Translation_prot_SH3-like_sf"/>
</dbReference>
<dbReference type="NCBIfam" id="TIGR01171">
    <property type="entry name" value="rplB_bact"/>
    <property type="match status" value="1"/>
</dbReference>
<dbReference type="PANTHER" id="PTHR13691:SF5">
    <property type="entry name" value="LARGE RIBOSOMAL SUBUNIT PROTEIN UL2M"/>
    <property type="match status" value="1"/>
</dbReference>
<dbReference type="PANTHER" id="PTHR13691">
    <property type="entry name" value="RIBOSOMAL PROTEIN L2"/>
    <property type="match status" value="1"/>
</dbReference>
<dbReference type="Pfam" id="PF00181">
    <property type="entry name" value="Ribosomal_L2"/>
    <property type="match status" value="1"/>
</dbReference>
<dbReference type="Pfam" id="PF03947">
    <property type="entry name" value="Ribosomal_L2_C"/>
    <property type="match status" value="1"/>
</dbReference>
<dbReference type="PIRSF" id="PIRSF002158">
    <property type="entry name" value="Ribosomal_L2"/>
    <property type="match status" value="1"/>
</dbReference>
<dbReference type="SMART" id="SM01383">
    <property type="entry name" value="Ribosomal_L2"/>
    <property type="match status" value="1"/>
</dbReference>
<dbReference type="SMART" id="SM01382">
    <property type="entry name" value="Ribosomal_L2_C"/>
    <property type="match status" value="1"/>
</dbReference>
<dbReference type="SUPFAM" id="SSF50249">
    <property type="entry name" value="Nucleic acid-binding proteins"/>
    <property type="match status" value="1"/>
</dbReference>
<dbReference type="SUPFAM" id="SSF50104">
    <property type="entry name" value="Translation proteins SH3-like domain"/>
    <property type="match status" value="1"/>
</dbReference>
<dbReference type="PROSITE" id="PS00467">
    <property type="entry name" value="RIBOSOMAL_L2"/>
    <property type="match status" value="1"/>
</dbReference>
<accession>Q0G9P9</accession>
<evidence type="ECO:0000250" key="1"/>
<evidence type="ECO:0000255" key="2">
    <source>
        <dbReference type="HAMAP-Rule" id="MF_01320"/>
    </source>
</evidence>
<evidence type="ECO:0000256" key="3">
    <source>
        <dbReference type="SAM" id="MobiDB-lite"/>
    </source>
</evidence>
<evidence type="ECO:0000305" key="4"/>
<protein>
    <recommendedName>
        <fullName evidence="2">Large ribosomal subunit protein uL2cz/uL2cy</fullName>
    </recommendedName>
    <alternativeName>
        <fullName evidence="4">50S ribosomal protein L2, chloroplastic</fullName>
    </alternativeName>
</protein>
<geneLocation type="chloroplast"/>
<comment type="subunit">
    <text evidence="1">Part of the 50S ribosomal subunit.</text>
</comment>
<comment type="subcellular location">
    <subcellularLocation>
        <location>Plastid</location>
        <location>Chloroplast</location>
    </subcellularLocation>
</comment>
<comment type="similarity">
    <text evidence="4">Belongs to the universal ribosomal protein uL2 family.</text>
</comment>
<organism>
    <name type="scientific">Daucus carota</name>
    <name type="common">Wild carrot</name>
    <dbReference type="NCBI Taxonomy" id="4039"/>
    <lineage>
        <taxon>Eukaryota</taxon>
        <taxon>Viridiplantae</taxon>
        <taxon>Streptophyta</taxon>
        <taxon>Embryophyta</taxon>
        <taxon>Tracheophyta</taxon>
        <taxon>Spermatophyta</taxon>
        <taxon>Magnoliopsida</taxon>
        <taxon>eudicotyledons</taxon>
        <taxon>Gunneridae</taxon>
        <taxon>Pentapetalae</taxon>
        <taxon>asterids</taxon>
        <taxon>campanulids</taxon>
        <taxon>Apiales</taxon>
        <taxon>Apiaceae</taxon>
        <taxon>Apioideae</taxon>
        <taxon>Scandiceae</taxon>
        <taxon>Daucinae</taxon>
        <taxon>Daucus</taxon>
        <taxon>Daucus sect. Daucus</taxon>
    </lineage>
</organism>
<proteinExistence type="inferred from homology"/>
<keyword id="KW-0150">Chloroplast</keyword>
<keyword id="KW-0934">Plastid</keyword>
<keyword id="KW-0687">Ribonucleoprotein</keyword>
<keyword id="KW-0689">Ribosomal protein</keyword>
<name>RK2_DAUCA</name>
<feature type="chain" id="PRO_0000277087" description="Large ribosomal subunit protein uL2cz/uL2cy">
    <location>
        <begin position="1"/>
        <end position="274"/>
    </location>
</feature>
<feature type="region of interest" description="Disordered" evidence="3">
    <location>
        <begin position="1"/>
        <end position="26"/>
    </location>
</feature>
<feature type="region of interest" description="Disordered" evidence="3">
    <location>
        <begin position="223"/>
        <end position="274"/>
    </location>
</feature>
<gene>
    <name type="primary">rpl2-A</name>
</gene>
<gene>
    <name type="primary">rpl2-B</name>
</gene>
<reference key="1">
    <citation type="journal article" date="2006" name="BMC Genomics">
        <title>Complete plastid genome sequence of Daucus carota: implications for biotechnology and phylogeny of angiosperms.</title>
        <authorList>
            <person name="Ruhlman T."/>
            <person name="Lee S.-B."/>
            <person name="Jansen R.K."/>
            <person name="Hostetler J.B."/>
            <person name="Tallon L.J."/>
            <person name="Town C.D."/>
            <person name="Daniell H."/>
        </authorList>
    </citation>
    <scope>NUCLEOTIDE SEQUENCE [LARGE SCALE GENOMIC DNA]</scope>
    <source>
        <strain>cv. Danvers Half-long</strain>
    </source>
</reference>